<proteinExistence type="evidence at transcript level"/>
<protein>
    <recommendedName>
        <fullName>Putative cleavage and polyadenylation specificity factor subunit 4-like protein</fullName>
    </recommendedName>
</protein>
<organism>
    <name type="scientific">Homo sapiens</name>
    <name type="common">Human</name>
    <dbReference type="NCBI Taxonomy" id="9606"/>
    <lineage>
        <taxon>Eukaryota</taxon>
        <taxon>Metazoa</taxon>
        <taxon>Chordata</taxon>
        <taxon>Craniata</taxon>
        <taxon>Vertebrata</taxon>
        <taxon>Euteleostomi</taxon>
        <taxon>Mammalia</taxon>
        <taxon>Eutheria</taxon>
        <taxon>Euarchontoglires</taxon>
        <taxon>Primates</taxon>
        <taxon>Haplorrhini</taxon>
        <taxon>Catarrhini</taxon>
        <taxon>Hominidae</taxon>
        <taxon>Homo</taxon>
    </lineage>
</organism>
<comment type="similarity">
    <text evidence="2">Belongs to the CPSF4/YTH1 family.</text>
</comment>
<comment type="sequence caution" evidence="2">
    <conflict type="erroneous gene model prediction">
        <sequence resource="EMBL" id="AC087301"/>
    </conflict>
</comment>
<name>CPS4L_HUMAN</name>
<feature type="chain" id="PRO_0000317366" description="Putative cleavage and polyadenylation specificity factor subunit 4-like protein">
    <location>
        <begin position="1"/>
        <end position="179"/>
    </location>
</feature>
<feature type="zinc finger region" description="C3H1-type 1" evidence="1">
    <location>
        <begin position="35"/>
        <end position="61"/>
    </location>
</feature>
<feature type="zinc finger region" description="C3H1-type 2" evidence="1">
    <location>
        <begin position="62"/>
        <end position="89"/>
    </location>
</feature>
<feature type="zinc finger region" description="C3H1-type 3" evidence="1">
    <location>
        <begin position="90"/>
        <end position="117"/>
    </location>
</feature>
<feature type="zinc finger region" description="C3H1-type 4" evidence="1">
    <location>
        <begin position="118"/>
        <end position="145"/>
    </location>
</feature>
<feature type="zinc finger region" description="C3H1-type 5" evidence="1">
    <location>
        <begin position="146"/>
        <end position="169"/>
    </location>
</feature>
<evidence type="ECO:0000255" key="1">
    <source>
        <dbReference type="PROSITE-ProRule" id="PRU00723"/>
    </source>
</evidence>
<evidence type="ECO:0000305" key="2"/>
<accession>A6NMK7</accession>
<accession>A8MU95</accession>
<accession>B2RXI9</accession>
<sequence>MQEVIAGLERFTFAFEKDVEMQKGTGLLPFQGMDKSASAVCNFFTKGLCEKGKLCPFRHDRGEKMVVCKHWLRGLCKKGDHCKFLHQYDLTRMPECYFYSKFGDCSNKECSFLHVKPAFKSQDCPWYDQGFCKDGPLCKYRHVPRIMCLNYLVGFCPEGPKCQFAQKIREFKLLPGSKI</sequence>
<gene>
    <name type="primary">CPSF4L</name>
</gene>
<dbReference type="EMBL" id="AC087301">
    <property type="status" value="NOT_ANNOTATED_CDS"/>
    <property type="molecule type" value="Genomic_DNA"/>
</dbReference>
<dbReference type="EMBL" id="BC157870">
    <property type="protein sequence ID" value="AAI57871.1"/>
    <property type="molecule type" value="mRNA"/>
</dbReference>
<dbReference type="CCDS" id="CCDS45768.1"/>
<dbReference type="RefSeq" id="NP_001123357.1">
    <property type="nucleotide sequence ID" value="NM_001129885.1"/>
</dbReference>
<dbReference type="SMR" id="A6NMK7"/>
<dbReference type="BioGRID" id="568295">
    <property type="interactions" value="11"/>
</dbReference>
<dbReference type="FunCoup" id="A6NMK7">
    <property type="interactions" value="99"/>
</dbReference>
<dbReference type="IntAct" id="A6NMK7">
    <property type="interactions" value="7"/>
</dbReference>
<dbReference type="STRING" id="9606.ENSP00000343900"/>
<dbReference type="iPTMnet" id="A6NMK7"/>
<dbReference type="PhosphoSitePlus" id="A6NMK7"/>
<dbReference type="BioMuta" id="CPSF4L"/>
<dbReference type="jPOST" id="A6NMK7"/>
<dbReference type="MassIVE" id="A6NMK7"/>
<dbReference type="PaxDb" id="9606-ENSP00000343900"/>
<dbReference type="PeptideAtlas" id="A6NMK7"/>
<dbReference type="ProteomicsDB" id="1543"/>
<dbReference type="Antibodypedia" id="51445">
    <property type="antibodies" value="80 antibodies from 15 providers"/>
</dbReference>
<dbReference type="DNASU" id="642843"/>
<dbReference type="Ensembl" id="ENST00000344935.8">
    <property type="protein sequence ID" value="ENSP00000343900.4"/>
    <property type="gene ID" value="ENSG00000187959.9"/>
</dbReference>
<dbReference type="GeneID" id="642843"/>
<dbReference type="KEGG" id="hsa:642843"/>
<dbReference type="MANE-Select" id="ENST00000344935.8">
    <property type="protein sequence ID" value="ENSP00000343900.4"/>
    <property type="RefSeq nucleotide sequence ID" value="NM_001129885.1"/>
    <property type="RefSeq protein sequence ID" value="NP_001123357.1"/>
</dbReference>
<dbReference type="UCSC" id="uc010dfk.1">
    <property type="organism name" value="human"/>
</dbReference>
<dbReference type="AGR" id="HGNC:33632"/>
<dbReference type="CTD" id="642843"/>
<dbReference type="DisGeNET" id="642843"/>
<dbReference type="GeneCards" id="CPSF4L"/>
<dbReference type="HGNC" id="HGNC:33632">
    <property type="gene designation" value="CPSF4L"/>
</dbReference>
<dbReference type="HPA" id="ENSG00000187959">
    <property type="expression patterns" value="Not detected"/>
</dbReference>
<dbReference type="neXtProt" id="NX_A6NMK7"/>
<dbReference type="OpenTargets" id="ENSG00000187959"/>
<dbReference type="PharmGKB" id="PA162382768"/>
<dbReference type="VEuPathDB" id="HostDB:ENSG00000187959"/>
<dbReference type="eggNOG" id="KOG1040">
    <property type="taxonomic scope" value="Eukaryota"/>
</dbReference>
<dbReference type="GeneTree" id="ENSGT00940000162882"/>
<dbReference type="HOGENOM" id="CLU_024513_2_0_1"/>
<dbReference type="InParanoid" id="A6NMK7"/>
<dbReference type="OMA" id="SKECLWY"/>
<dbReference type="OrthoDB" id="1914176at2759"/>
<dbReference type="PAN-GO" id="A6NMK7">
    <property type="GO annotations" value="2 GO annotations based on evolutionary models"/>
</dbReference>
<dbReference type="PhylomeDB" id="A6NMK7"/>
<dbReference type="TreeFam" id="TF314871"/>
<dbReference type="PathwayCommons" id="A6NMK7"/>
<dbReference type="SignaLink" id="A6NMK7"/>
<dbReference type="BioGRID-ORCS" id="642843">
    <property type="hits" value="18 hits in 1146 CRISPR screens"/>
</dbReference>
<dbReference type="ChiTaRS" id="CPSF4L">
    <property type="organism name" value="human"/>
</dbReference>
<dbReference type="GenomeRNAi" id="642843"/>
<dbReference type="Pharos" id="A6NMK7">
    <property type="development level" value="Tdark"/>
</dbReference>
<dbReference type="PRO" id="PR:A6NMK7"/>
<dbReference type="Proteomes" id="UP000005640">
    <property type="component" value="Chromosome 17"/>
</dbReference>
<dbReference type="RNAct" id="A6NMK7">
    <property type="molecule type" value="protein"/>
</dbReference>
<dbReference type="Bgee" id="ENSG00000187959">
    <property type="expression patterns" value="Expressed in male germ line stem cell (sensu Vertebrata) in testis and 84 other cell types or tissues"/>
</dbReference>
<dbReference type="ExpressionAtlas" id="A6NMK7">
    <property type="expression patterns" value="baseline and differential"/>
</dbReference>
<dbReference type="GO" id="GO:0005847">
    <property type="term" value="C:mRNA cleavage and polyadenylation specificity factor complex"/>
    <property type="evidence" value="ECO:0000318"/>
    <property type="project" value="GO_Central"/>
</dbReference>
<dbReference type="GO" id="GO:0003723">
    <property type="term" value="F:RNA binding"/>
    <property type="evidence" value="ECO:0007669"/>
    <property type="project" value="UniProtKB-KW"/>
</dbReference>
<dbReference type="GO" id="GO:0008270">
    <property type="term" value="F:zinc ion binding"/>
    <property type="evidence" value="ECO:0007669"/>
    <property type="project" value="UniProtKB-KW"/>
</dbReference>
<dbReference type="FunFam" id="4.10.1000.10:FF:000012">
    <property type="entry name" value="cleavage and polyadenylation specificity factor subunit 4"/>
    <property type="match status" value="1"/>
</dbReference>
<dbReference type="FunFam" id="4.10.1000.10:FF:000058">
    <property type="entry name" value="putative cleavage and polyadenylation specificity factor subunit 4-like protein"/>
    <property type="match status" value="1"/>
</dbReference>
<dbReference type="Gene3D" id="4.10.1000.10">
    <property type="entry name" value="Zinc finger, CCCH-type"/>
    <property type="match status" value="3"/>
</dbReference>
<dbReference type="InterPro" id="IPR045348">
    <property type="entry name" value="CPSF4/Yth1"/>
</dbReference>
<dbReference type="InterPro" id="IPR041686">
    <property type="entry name" value="Znf-CCCH_3"/>
</dbReference>
<dbReference type="InterPro" id="IPR000571">
    <property type="entry name" value="Znf_CCCH"/>
</dbReference>
<dbReference type="InterPro" id="IPR036855">
    <property type="entry name" value="Znf_CCCH_sf"/>
</dbReference>
<dbReference type="PANTHER" id="PTHR23102:SF19">
    <property type="entry name" value="CLEAVAGE AND POLYADENYLATION SPECIFICITY FACTOR SUBUNIT 4-LIKE PROTEIN-RELATED"/>
    <property type="match status" value="1"/>
</dbReference>
<dbReference type="PANTHER" id="PTHR23102">
    <property type="entry name" value="CLEAVAGE AND POLYADENYLATION SPECIFICITY FACTOR SUBUNIT 4-RELATED"/>
    <property type="match status" value="1"/>
</dbReference>
<dbReference type="Pfam" id="PF14608">
    <property type="entry name" value="zf-CCCH_2"/>
    <property type="match status" value="2"/>
</dbReference>
<dbReference type="Pfam" id="PF15663">
    <property type="entry name" value="zf-CCCH_3"/>
    <property type="match status" value="1"/>
</dbReference>
<dbReference type="SMART" id="SM00356">
    <property type="entry name" value="ZnF_C3H1"/>
    <property type="match status" value="5"/>
</dbReference>
<dbReference type="SUPFAM" id="SSF90229">
    <property type="entry name" value="CCCH zinc finger"/>
    <property type="match status" value="2"/>
</dbReference>
<dbReference type="PROSITE" id="PS50103">
    <property type="entry name" value="ZF_C3H1"/>
    <property type="match status" value="5"/>
</dbReference>
<reference key="1">
    <citation type="journal article" date="2006" name="Nature">
        <title>DNA sequence of human chromosome 17 and analysis of rearrangement in the human lineage.</title>
        <authorList>
            <person name="Zody M.C."/>
            <person name="Garber M."/>
            <person name="Adams D.J."/>
            <person name="Sharpe T."/>
            <person name="Harrow J."/>
            <person name="Lupski J.R."/>
            <person name="Nicholson C."/>
            <person name="Searle S.M."/>
            <person name="Wilming L."/>
            <person name="Young S.K."/>
            <person name="Abouelleil A."/>
            <person name="Allen N.R."/>
            <person name="Bi W."/>
            <person name="Bloom T."/>
            <person name="Borowsky M.L."/>
            <person name="Bugalter B.E."/>
            <person name="Butler J."/>
            <person name="Chang J.L."/>
            <person name="Chen C.-K."/>
            <person name="Cook A."/>
            <person name="Corum B."/>
            <person name="Cuomo C.A."/>
            <person name="de Jong P.J."/>
            <person name="DeCaprio D."/>
            <person name="Dewar K."/>
            <person name="FitzGerald M."/>
            <person name="Gilbert J."/>
            <person name="Gibson R."/>
            <person name="Gnerre S."/>
            <person name="Goldstein S."/>
            <person name="Grafham D.V."/>
            <person name="Grocock R."/>
            <person name="Hafez N."/>
            <person name="Hagopian D.S."/>
            <person name="Hart E."/>
            <person name="Norman C.H."/>
            <person name="Humphray S."/>
            <person name="Jaffe D.B."/>
            <person name="Jones M."/>
            <person name="Kamal M."/>
            <person name="Khodiyar V.K."/>
            <person name="LaButti K."/>
            <person name="Laird G."/>
            <person name="Lehoczky J."/>
            <person name="Liu X."/>
            <person name="Lokyitsang T."/>
            <person name="Loveland J."/>
            <person name="Lui A."/>
            <person name="Macdonald P."/>
            <person name="Major J.E."/>
            <person name="Matthews L."/>
            <person name="Mauceli E."/>
            <person name="McCarroll S.A."/>
            <person name="Mihalev A.H."/>
            <person name="Mudge J."/>
            <person name="Nguyen C."/>
            <person name="Nicol R."/>
            <person name="O'Leary S.B."/>
            <person name="Osoegawa K."/>
            <person name="Schwartz D.C."/>
            <person name="Shaw-Smith C."/>
            <person name="Stankiewicz P."/>
            <person name="Steward C."/>
            <person name="Swarbreck D."/>
            <person name="Venkataraman V."/>
            <person name="Whittaker C.A."/>
            <person name="Yang X."/>
            <person name="Zimmer A.R."/>
            <person name="Bradley A."/>
            <person name="Hubbard T."/>
            <person name="Birren B.W."/>
            <person name="Rogers J."/>
            <person name="Lander E.S."/>
            <person name="Nusbaum C."/>
        </authorList>
    </citation>
    <scope>NUCLEOTIDE SEQUENCE [LARGE SCALE GENOMIC DNA]</scope>
</reference>
<reference key="2">
    <citation type="journal article" date="2004" name="Genome Res.">
        <title>The status, quality, and expansion of the NIH full-length cDNA project: the Mammalian Gene Collection (MGC).</title>
        <authorList>
            <consortium name="The MGC Project Team"/>
        </authorList>
    </citation>
    <scope>NUCLEOTIDE SEQUENCE [LARGE SCALE MRNA]</scope>
</reference>
<keyword id="KW-0479">Metal-binding</keyword>
<keyword id="KW-1185">Reference proteome</keyword>
<keyword id="KW-0677">Repeat</keyword>
<keyword id="KW-0694">RNA-binding</keyword>
<keyword id="KW-0862">Zinc</keyword>
<keyword id="KW-0863">Zinc-finger</keyword>